<proteinExistence type="inferred from homology"/>
<geneLocation type="chloroplast"/>
<reference key="1">
    <citation type="submission" date="2003-02" db="EMBL/GenBank/DDBJ databases">
        <title>Complete nucleotide sequence of Pinus koraiensis.</title>
        <authorList>
            <person name="Noh E.W."/>
            <person name="Lee J.S."/>
            <person name="Choi Y.I."/>
            <person name="Han M.S."/>
            <person name="Yi Y.S."/>
            <person name="Han S.U."/>
        </authorList>
    </citation>
    <scope>NUCLEOTIDE SEQUENCE [LARGE SCALE GENOMIC DNA]</scope>
    <source>
        <strain>KangWon16</strain>
    </source>
</reference>
<name>PSBD_PINKO</name>
<gene>
    <name evidence="2" type="primary">psbD</name>
</gene>
<dbReference type="EC" id="1.10.3.9" evidence="2"/>
<dbReference type="EMBL" id="AY228468">
    <property type="protein sequence ID" value="AAO74104.1"/>
    <property type="molecule type" value="Genomic_DNA"/>
</dbReference>
<dbReference type="RefSeq" id="NP_817259.1">
    <property type="nucleotide sequence ID" value="NC_004677.2"/>
</dbReference>
<dbReference type="SMR" id="Q85WW5"/>
<dbReference type="GeneID" id="806959"/>
<dbReference type="GO" id="GO:0009535">
    <property type="term" value="C:chloroplast thylakoid membrane"/>
    <property type="evidence" value="ECO:0007669"/>
    <property type="project" value="UniProtKB-SubCell"/>
</dbReference>
<dbReference type="GO" id="GO:0009523">
    <property type="term" value="C:photosystem II"/>
    <property type="evidence" value="ECO:0007669"/>
    <property type="project" value="UniProtKB-KW"/>
</dbReference>
<dbReference type="GO" id="GO:0016168">
    <property type="term" value="F:chlorophyll binding"/>
    <property type="evidence" value="ECO:0007669"/>
    <property type="project" value="UniProtKB-UniRule"/>
</dbReference>
<dbReference type="GO" id="GO:0045156">
    <property type="term" value="F:electron transporter, transferring electrons within the cyclic electron transport pathway of photosynthesis activity"/>
    <property type="evidence" value="ECO:0007669"/>
    <property type="project" value="InterPro"/>
</dbReference>
<dbReference type="GO" id="GO:0005506">
    <property type="term" value="F:iron ion binding"/>
    <property type="evidence" value="ECO:0007669"/>
    <property type="project" value="UniProtKB-UniRule"/>
</dbReference>
<dbReference type="GO" id="GO:0010242">
    <property type="term" value="F:oxygen evolving activity"/>
    <property type="evidence" value="ECO:0007669"/>
    <property type="project" value="UniProtKB-EC"/>
</dbReference>
<dbReference type="GO" id="GO:0009772">
    <property type="term" value="P:photosynthetic electron transport in photosystem II"/>
    <property type="evidence" value="ECO:0007669"/>
    <property type="project" value="InterPro"/>
</dbReference>
<dbReference type="CDD" id="cd09288">
    <property type="entry name" value="Photosystem-II_D2"/>
    <property type="match status" value="1"/>
</dbReference>
<dbReference type="FunFam" id="1.20.85.10:FF:000001">
    <property type="entry name" value="photosystem II D2 protein-like"/>
    <property type="match status" value="1"/>
</dbReference>
<dbReference type="Gene3D" id="1.20.85.10">
    <property type="entry name" value="Photosystem II protein D1-like"/>
    <property type="match status" value="1"/>
</dbReference>
<dbReference type="HAMAP" id="MF_01383">
    <property type="entry name" value="PSII_PsbD_D2"/>
    <property type="match status" value="1"/>
</dbReference>
<dbReference type="InterPro" id="IPR055266">
    <property type="entry name" value="D1/D2"/>
</dbReference>
<dbReference type="InterPro" id="IPR036854">
    <property type="entry name" value="Photo_II_D1/D2_sf"/>
</dbReference>
<dbReference type="InterPro" id="IPR000484">
    <property type="entry name" value="Photo_RC_L/M"/>
</dbReference>
<dbReference type="InterPro" id="IPR055265">
    <property type="entry name" value="Photo_RC_L/M_CS"/>
</dbReference>
<dbReference type="InterPro" id="IPR005868">
    <property type="entry name" value="PSII_PsbD/D2"/>
</dbReference>
<dbReference type="NCBIfam" id="TIGR01152">
    <property type="entry name" value="psbD"/>
    <property type="match status" value="1"/>
</dbReference>
<dbReference type="PANTHER" id="PTHR33149:SF12">
    <property type="entry name" value="PHOTOSYSTEM II D2 PROTEIN"/>
    <property type="match status" value="1"/>
</dbReference>
<dbReference type="PANTHER" id="PTHR33149">
    <property type="entry name" value="PHOTOSYSTEM II PROTEIN D1"/>
    <property type="match status" value="1"/>
</dbReference>
<dbReference type="Pfam" id="PF00124">
    <property type="entry name" value="Photo_RC"/>
    <property type="match status" value="1"/>
</dbReference>
<dbReference type="PRINTS" id="PR00256">
    <property type="entry name" value="REACTNCENTRE"/>
</dbReference>
<dbReference type="SUPFAM" id="SSF81483">
    <property type="entry name" value="Bacterial photosystem II reaction centre, L and M subunits"/>
    <property type="match status" value="1"/>
</dbReference>
<dbReference type="PROSITE" id="PS00244">
    <property type="entry name" value="REACTION_CENTER"/>
    <property type="match status" value="1"/>
</dbReference>
<accession>Q85WW5</accession>
<comment type="function">
    <text evidence="2">Photosystem II (PSII) is a light-driven water:plastoquinone oxidoreductase that uses light energy to abstract electrons from H(2)O, generating O(2) and a proton gradient subsequently used for ATP formation. It consists of a core antenna complex that captures photons, and an electron transfer chain that converts photonic excitation into a charge separation. The D1/D2 (PsbA/PsbD) reaction center heterodimer binds P680, the primary electron donor of PSII as well as several subsequent electron acceptors. D2 is needed for assembly of a stable PSII complex.</text>
</comment>
<comment type="catalytic activity">
    <reaction evidence="2">
        <text>2 a plastoquinone + 4 hnu + 2 H2O = 2 a plastoquinol + O2</text>
        <dbReference type="Rhea" id="RHEA:36359"/>
        <dbReference type="Rhea" id="RHEA-COMP:9561"/>
        <dbReference type="Rhea" id="RHEA-COMP:9562"/>
        <dbReference type="ChEBI" id="CHEBI:15377"/>
        <dbReference type="ChEBI" id="CHEBI:15379"/>
        <dbReference type="ChEBI" id="CHEBI:17757"/>
        <dbReference type="ChEBI" id="CHEBI:30212"/>
        <dbReference type="ChEBI" id="CHEBI:62192"/>
        <dbReference type="EC" id="1.10.3.9"/>
    </reaction>
</comment>
<comment type="cofactor">
    <text evidence="2">The D1/D2 heterodimer binds P680, chlorophylls that are the primary electron donor of PSII, and subsequent electron acceptors. It shares a non-heme iron and each subunit binds pheophytin, quinone, additional chlorophylls, carotenoids and lipids. There is also a Cl(-1) ion associated with D1 and D2, which is required for oxygen evolution. The PSII complex binds additional chlorophylls, carotenoids and specific lipids.</text>
</comment>
<comment type="subunit">
    <text evidence="2">PSII is composed of 1 copy each of membrane proteins PsbA, PsbB, PsbC, PsbD, PsbE, PsbF, PsbH, PsbI, PsbJ, PsbK, PsbL, PsbM, PsbT, PsbX, PsbY, PsbZ, Psb30/Ycf12, at least 3 peripheral proteins of the oxygen-evolving complex and a large number of cofactors. It forms dimeric complexes.</text>
</comment>
<comment type="subcellular location">
    <subcellularLocation>
        <location evidence="2">Plastid</location>
        <location evidence="2">Chloroplast thylakoid membrane</location>
        <topology evidence="2">Multi-pass membrane protein</topology>
    </subcellularLocation>
</comment>
<comment type="miscellaneous">
    <text evidence="2">2 of the reaction center chlorophylls (ChlD1 and ChlD2) are entirely coordinated by water.</text>
</comment>
<comment type="similarity">
    <text evidence="2">Belongs to the reaction center PufL/M/PsbA/D family.</text>
</comment>
<sequence length="353" mass="39403">MTITLGKSSKEEQTLFDTVDDWLRRDRFVFVGWSGLLLFPCAYFALGGWFTGTTFVTSWYTHGLASSYLEGCNFLTAAVSTPANSLAHSLLLLWGPEAQGDFTRWCQLGGLWTFVALHGAFGLIGFMLRQFELARSVQLRPYNAIAFSAPIAVFVSVFLIYPLGQSGWFFAPSFGVAAIFRFILFFQGFHNWTLNPFHMMGVAGVLGAALLCAIHGATVENTLFEDGDGANTFRAFNPTQAEETYSMVTANRFWSQIFGVAFSNKRWLHFFMLFVPVTGSWMSAIGVVGLALNLRAYDFVSQEIRAAEDPESETFYTKNILLNEGIRAWMAAQDQPHENLIFPEEVLPRGNAL</sequence>
<evidence type="ECO:0000250" key="1">
    <source>
        <dbReference type="UniProtKB" id="P56761"/>
    </source>
</evidence>
<evidence type="ECO:0000255" key="2">
    <source>
        <dbReference type="HAMAP-Rule" id="MF_01383"/>
    </source>
</evidence>
<keyword id="KW-0007">Acetylation</keyword>
<keyword id="KW-0148">Chlorophyll</keyword>
<keyword id="KW-0150">Chloroplast</keyword>
<keyword id="KW-0157">Chromophore</keyword>
<keyword id="KW-0249">Electron transport</keyword>
<keyword id="KW-0408">Iron</keyword>
<keyword id="KW-0460">Magnesium</keyword>
<keyword id="KW-0472">Membrane</keyword>
<keyword id="KW-0479">Metal-binding</keyword>
<keyword id="KW-0560">Oxidoreductase</keyword>
<keyword id="KW-0597">Phosphoprotein</keyword>
<keyword id="KW-0602">Photosynthesis</keyword>
<keyword id="KW-0604">Photosystem II</keyword>
<keyword id="KW-0934">Plastid</keyword>
<keyword id="KW-0793">Thylakoid</keyword>
<keyword id="KW-0812">Transmembrane</keyword>
<keyword id="KW-1133">Transmembrane helix</keyword>
<keyword id="KW-0813">Transport</keyword>
<organism>
    <name type="scientific">Pinus koraiensis</name>
    <name type="common">Korean pine</name>
    <dbReference type="NCBI Taxonomy" id="88728"/>
    <lineage>
        <taxon>Eukaryota</taxon>
        <taxon>Viridiplantae</taxon>
        <taxon>Streptophyta</taxon>
        <taxon>Embryophyta</taxon>
        <taxon>Tracheophyta</taxon>
        <taxon>Spermatophyta</taxon>
        <taxon>Pinopsida</taxon>
        <taxon>Pinidae</taxon>
        <taxon>Conifers I</taxon>
        <taxon>Pinales</taxon>
        <taxon>Pinaceae</taxon>
        <taxon>Pinus</taxon>
        <taxon>Pinus subgen. Strobus</taxon>
    </lineage>
</organism>
<protein>
    <recommendedName>
        <fullName evidence="2">Photosystem II D2 protein</fullName>
        <shortName evidence="2">PSII D2 protein</shortName>
        <ecNumber evidence="2">1.10.3.9</ecNumber>
    </recommendedName>
    <alternativeName>
        <fullName evidence="2">Photosystem Q(A) protein</fullName>
    </alternativeName>
</protein>
<feature type="initiator methionine" description="Removed" evidence="1">
    <location>
        <position position="1"/>
    </location>
</feature>
<feature type="chain" id="PRO_0000277436" description="Photosystem II D2 protein">
    <location>
        <begin position="2"/>
        <end position="353"/>
    </location>
</feature>
<feature type="transmembrane region" description="Helical" evidence="2">
    <location>
        <begin position="41"/>
        <end position="61"/>
    </location>
</feature>
<feature type="transmembrane region" description="Helical" evidence="2">
    <location>
        <begin position="125"/>
        <end position="141"/>
    </location>
</feature>
<feature type="transmembrane region" description="Helical" evidence="2">
    <location>
        <begin position="153"/>
        <end position="166"/>
    </location>
</feature>
<feature type="transmembrane region" description="Helical" evidence="2">
    <location>
        <begin position="208"/>
        <end position="228"/>
    </location>
</feature>
<feature type="transmembrane region" description="Helical" evidence="2">
    <location>
        <begin position="279"/>
        <end position="295"/>
    </location>
</feature>
<feature type="binding site" description="axial binding residue" evidence="2">
    <location>
        <position position="118"/>
    </location>
    <ligand>
        <name>chlorophyll a</name>
        <dbReference type="ChEBI" id="CHEBI:58416"/>
        <label>ChlzD2</label>
    </ligand>
    <ligandPart>
        <name>Mg</name>
        <dbReference type="ChEBI" id="CHEBI:25107"/>
    </ligandPart>
</feature>
<feature type="binding site" evidence="2">
    <location>
        <position position="130"/>
    </location>
    <ligand>
        <name>pheophytin a</name>
        <dbReference type="ChEBI" id="CHEBI:136840"/>
        <label>D2</label>
    </ligand>
</feature>
<feature type="binding site" evidence="2">
    <location>
        <position position="143"/>
    </location>
    <ligand>
        <name>pheophytin a</name>
        <dbReference type="ChEBI" id="CHEBI:136840"/>
        <label>D2</label>
    </ligand>
</feature>
<feature type="binding site" description="axial binding residue" evidence="2">
    <location>
        <position position="198"/>
    </location>
    <ligand>
        <name>chlorophyll a</name>
        <dbReference type="ChEBI" id="CHEBI:58416"/>
        <label>PD2</label>
    </ligand>
    <ligandPart>
        <name>Mg</name>
        <dbReference type="ChEBI" id="CHEBI:25107"/>
    </ligandPart>
</feature>
<feature type="binding site" evidence="2">
    <location>
        <position position="215"/>
    </location>
    <ligand>
        <name>a plastoquinone</name>
        <dbReference type="ChEBI" id="CHEBI:17757"/>
        <label>Q(A)</label>
    </ligand>
</feature>
<feature type="binding site" evidence="2">
    <location>
        <position position="215"/>
    </location>
    <ligand>
        <name>Fe cation</name>
        <dbReference type="ChEBI" id="CHEBI:24875"/>
        <note>ligand shared with heterodimeric partner</note>
    </ligand>
</feature>
<feature type="binding site" evidence="2">
    <location>
        <position position="262"/>
    </location>
    <ligand>
        <name>a plastoquinone</name>
        <dbReference type="ChEBI" id="CHEBI:17757"/>
        <label>Q(A)</label>
    </ligand>
</feature>
<feature type="binding site" evidence="2">
    <location>
        <position position="269"/>
    </location>
    <ligand>
        <name>Fe cation</name>
        <dbReference type="ChEBI" id="CHEBI:24875"/>
        <note>ligand shared with heterodimeric partner</note>
    </ligand>
</feature>
<feature type="modified residue" description="N-acetylthreonine" evidence="1">
    <location>
        <position position="2"/>
    </location>
</feature>
<feature type="modified residue" description="Phosphothreonine" evidence="1">
    <location>
        <position position="2"/>
    </location>
</feature>